<comment type="function">
    <text evidence="1">Single strand-specific metallo-endoribonuclease involved in late-stage 70S ribosome quality control and in maturation of the 3' terminus of the 16S rRNA.</text>
</comment>
<comment type="cofactor">
    <cofactor evidence="1">
        <name>Zn(2+)</name>
        <dbReference type="ChEBI" id="CHEBI:29105"/>
    </cofactor>
    <text evidence="1">Binds 1 zinc ion.</text>
</comment>
<comment type="subcellular location">
    <subcellularLocation>
        <location evidence="1">Cytoplasm</location>
    </subcellularLocation>
</comment>
<comment type="similarity">
    <text evidence="1">Belongs to the endoribonuclease YbeY family.</text>
</comment>
<sequence>MIYIDNRQNKIKVNEEFENKIKEIIDYALKEEKVNIDYEISVVFIDNNSIKEINKDYRNIDKATDVLSFPMLDYEEGKVFKDVYLNYEFDESDLDEGNLILGDIALSLEKAEEQSKEFGHSFLRETCYLTIHSVLHLLGYDHMEEEEKAIMRQREEEILKSFNLRR</sequence>
<reference key="1">
    <citation type="submission" date="2008-05" db="EMBL/GenBank/DDBJ databases">
        <title>Genome sequence of Clostridium botulinum Ba4 strain 657.</title>
        <authorList>
            <person name="Shrivastava S."/>
            <person name="Brown J.L."/>
            <person name="Bruce D."/>
            <person name="Detter C."/>
            <person name="Munk C."/>
            <person name="Smith L.A."/>
            <person name="Smith T.J."/>
            <person name="Sutton G."/>
            <person name="Brettin T.S."/>
        </authorList>
    </citation>
    <scope>NUCLEOTIDE SEQUENCE [LARGE SCALE GENOMIC DNA]</scope>
    <source>
        <strain>657 / Type Ba4</strain>
    </source>
</reference>
<keyword id="KW-0963">Cytoplasm</keyword>
<keyword id="KW-0255">Endonuclease</keyword>
<keyword id="KW-0378">Hydrolase</keyword>
<keyword id="KW-0479">Metal-binding</keyword>
<keyword id="KW-0540">Nuclease</keyword>
<keyword id="KW-0690">Ribosome biogenesis</keyword>
<keyword id="KW-0698">rRNA processing</keyword>
<keyword id="KW-0862">Zinc</keyword>
<organism>
    <name type="scientific">Clostridium botulinum (strain 657 / Type Ba4)</name>
    <dbReference type="NCBI Taxonomy" id="515621"/>
    <lineage>
        <taxon>Bacteria</taxon>
        <taxon>Bacillati</taxon>
        <taxon>Bacillota</taxon>
        <taxon>Clostridia</taxon>
        <taxon>Eubacteriales</taxon>
        <taxon>Clostridiaceae</taxon>
        <taxon>Clostridium</taxon>
    </lineage>
</organism>
<feature type="chain" id="PRO_1000201729" description="Endoribonuclease YbeY">
    <location>
        <begin position="1"/>
        <end position="166"/>
    </location>
</feature>
<feature type="binding site" evidence="1">
    <location>
        <position position="132"/>
    </location>
    <ligand>
        <name>Zn(2+)</name>
        <dbReference type="ChEBI" id="CHEBI:29105"/>
        <note>catalytic</note>
    </ligand>
</feature>
<feature type="binding site" evidence="1">
    <location>
        <position position="136"/>
    </location>
    <ligand>
        <name>Zn(2+)</name>
        <dbReference type="ChEBI" id="CHEBI:29105"/>
        <note>catalytic</note>
    </ligand>
</feature>
<feature type="binding site" evidence="1">
    <location>
        <position position="142"/>
    </location>
    <ligand>
        <name>Zn(2+)</name>
        <dbReference type="ChEBI" id="CHEBI:29105"/>
        <note>catalytic</note>
    </ligand>
</feature>
<evidence type="ECO:0000255" key="1">
    <source>
        <dbReference type="HAMAP-Rule" id="MF_00009"/>
    </source>
</evidence>
<protein>
    <recommendedName>
        <fullName evidence="1">Endoribonuclease YbeY</fullName>
        <ecNumber evidence="1">3.1.-.-</ecNumber>
    </recommendedName>
</protein>
<dbReference type="EC" id="3.1.-.-" evidence="1"/>
<dbReference type="EMBL" id="CP001083">
    <property type="protein sequence ID" value="ACQ54360.1"/>
    <property type="molecule type" value="Genomic_DNA"/>
</dbReference>
<dbReference type="RefSeq" id="WP_003359975.1">
    <property type="nucleotide sequence ID" value="NC_012658.1"/>
</dbReference>
<dbReference type="SMR" id="C3L3F6"/>
<dbReference type="KEGG" id="cbi:CLJ_B3205"/>
<dbReference type="HOGENOM" id="CLU_106710_3_0_9"/>
<dbReference type="Proteomes" id="UP000002333">
    <property type="component" value="Chromosome"/>
</dbReference>
<dbReference type="GO" id="GO:0005737">
    <property type="term" value="C:cytoplasm"/>
    <property type="evidence" value="ECO:0007669"/>
    <property type="project" value="UniProtKB-SubCell"/>
</dbReference>
<dbReference type="GO" id="GO:0004222">
    <property type="term" value="F:metalloendopeptidase activity"/>
    <property type="evidence" value="ECO:0007669"/>
    <property type="project" value="InterPro"/>
</dbReference>
<dbReference type="GO" id="GO:0004521">
    <property type="term" value="F:RNA endonuclease activity"/>
    <property type="evidence" value="ECO:0007669"/>
    <property type="project" value="UniProtKB-UniRule"/>
</dbReference>
<dbReference type="GO" id="GO:0008270">
    <property type="term" value="F:zinc ion binding"/>
    <property type="evidence" value="ECO:0007669"/>
    <property type="project" value="UniProtKB-UniRule"/>
</dbReference>
<dbReference type="GO" id="GO:0006364">
    <property type="term" value="P:rRNA processing"/>
    <property type="evidence" value="ECO:0007669"/>
    <property type="project" value="UniProtKB-UniRule"/>
</dbReference>
<dbReference type="Gene3D" id="3.40.390.30">
    <property type="entry name" value="Metalloproteases ('zincins'), catalytic domain"/>
    <property type="match status" value="1"/>
</dbReference>
<dbReference type="HAMAP" id="MF_00009">
    <property type="entry name" value="Endoribonucl_YbeY"/>
    <property type="match status" value="1"/>
</dbReference>
<dbReference type="InterPro" id="IPR023091">
    <property type="entry name" value="MetalPrtase_cat_dom_sf_prd"/>
</dbReference>
<dbReference type="InterPro" id="IPR002036">
    <property type="entry name" value="YbeY"/>
</dbReference>
<dbReference type="InterPro" id="IPR020549">
    <property type="entry name" value="YbeY_CS"/>
</dbReference>
<dbReference type="NCBIfam" id="TIGR00043">
    <property type="entry name" value="rRNA maturation RNase YbeY"/>
    <property type="match status" value="1"/>
</dbReference>
<dbReference type="PANTHER" id="PTHR46986">
    <property type="entry name" value="ENDORIBONUCLEASE YBEY, CHLOROPLASTIC"/>
    <property type="match status" value="1"/>
</dbReference>
<dbReference type="PANTHER" id="PTHR46986:SF1">
    <property type="entry name" value="ENDORIBONUCLEASE YBEY, CHLOROPLASTIC"/>
    <property type="match status" value="1"/>
</dbReference>
<dbReference type="Pfam" id="PF02130">
    <property type="entry name" value="YbeY"/>
    <property type="match status" value="1"/>
</dbReference>
<dbReference type="SUPFAM" id="SSF55486">
    <property type="entry name" value="Metalloproteases ('zincins'), catalytic domain"/>
    <property type="match status" value="1"/>
</dbReference>
<dbReference type="PROSITE" id="PS01306">
    <property type="entry name" value="UPF0054"/>
    <property type="match status" value="1"/>
</dbReference>
<accession>C3L3F6</accession>
<name>YBEY_CLOB6</name>
<proteinExistence type="inferred from homology"/>
<gene>
    <name evidence="1" type="primary">ybeY</name>
    <name type="ordered locus">CLJ_B3205</name>
</gene>